<reference key="1">
    <citation type="journal article" date="2015" name="Genome Announc.">
        <title>Complete Genome Sequence of Methanosphaerula palustris E1-9CT, a Hydrogenotrophic Methanogen Isolated from a Minerotrophic Fen Peatland.</title>
        <authorList>
            <person name="Cadillo-Quiroz H."/>
            <person name="Browne P."/>
            <person name="Kyrpides N."/>
            <person name="Woyke T."/>
            <person name="Goodwin L."/>
            <person name="Detter C."/>
            <person name="Yavitt J.B."/>
            <person name="Zinder S.H."/>
        </authorList>
    </citation>
    <scope>NUCLEOTIDE SEQUENCE [LARGE SCALE GENOMIC DNA]</scope>
    <source>
        <strain>ATCC BAA-1556 / DSM 19958 / E1-9c</strain>
    </source>
</reference>
<name>RL40_METPE</name>
<protein>
    <recommendedName>
        <fullName evidence="1">Large ribosomal subunit protein eL40</fullName>
    </recommendedName>
    <alternativeName>
        <fullName evidence="2">50S ribosomal protein L40e</fullName>
    </alternativeName>
</protein>
<keyword id="KW-1185">Reference proteome</keyword>
<keyword id="KW-0687">Ribonucleoprotein</keyword>
<keyword id="KW-0689">Ribosomal protein</keyword>
<accession>B8GFB9</accession>
<sequence length="48" mass="5598">MGKFPEAEERLLNVKICMRCNARNAVRATTCRKCGYQNLRPKNKERKA</sequence>
<evidence type="ECO:0000255" key="1">
    <source>
        <dbReference type="HAMAP-Rule" id="MF_00788"/>
    </source>
</evidence>
<evidence type="ECO:0000305" key="2"/>
<gene>
    <name evidence="1" type="primary">rpl40e</name>
    <name type="ordered locus">Mpal_0596</name>
</gene>
<proteinExistence type="inferred from homology"/>
<comment type="similarity">
    <text evidence="1">Belongs to the eukaryotic ribosomal protein eL40 family.</text>
</comment>
<dbReference type="EMBL" id="CP001338">
    <property type="protein sequence ID" value="ACL15967.1"/>
    <property type="molecule type" value="Genomic_DNA"/>
</dbReference>
<dbReference type="RefSeq" id="WP_012617286.1">
    <property type="nucleotide sequence ID" value="NC_011832.1"/>
</dbReference>
<dbReference type="SMR" id="B8GFB9"/>
<dbReference type="STRING" id="521011.Mpal_0596"/>
<dbReference type="GeneID" id="7270183"/>
<dbReference type="KEGG" id="mpl:Mpal_0596"/>
<dbReference type="eggNOG" id="arCOG04049">
    <property type="taxonomic scope" value="Archaea"/>
</dbReference>
<dbReference type="HOGENOM" id="CLU_205640_0_0_2"/>
<dbReference type="OrthoDB" id="45138at2157"/>
<dbReference type="Proteomes" id="UP000002457">
    <property type="component" value="Chromosome"/>
</dbReference>
<dbReference type="GO" id="GO:1990904">
    <property type="term" value="C:ribonucleoprotein complex"/>
    <property type="evidence" value="ECO:0007669"/>
    <property type="project" value="UniProtKB-KW"/>
</dbReference>
<dbReference type="GO" id="GO:0005840">
    <property type="term" value="C:ribosome"/>
    <property type="evidence" value="ECO:0007669"/>
    <property type="project" value="UniProtKB-KW"/>
</dbReference>
<dbReference type="GO" id="GO:0003735">
    <property type="term" value="F:structural constituent of ribosome"/>
    <property type="evidence" value="ECO:0007669"/>
    <property type="project" value="InterPro"/>
</dbReference>
<dbReference type="GO" id="GO:0006412">
    <property type="term" value="P:translation"/>
    <property type="evidence" value="ECO:0007669"/>
    <property type="project" value="UniProtKB-UniRule"/>
</dbReference>
<dbReference type="Gene3D" id="4.10.1060.50">
    <property type="match status" value="1"/>
</dbReference>
<dbReference type="HAMAP" id="MF_00788">
    <property type="entry name" value="Ribosomal_eL40"/>
    <property type="match status" value="1"/>
</dbReference>
<dbReference type="InterPro" id="IPR023657">
    <property type="entry name" value="Ribosomal_eL40_arc"/>
</dbReference>
<dbReference type="InterPro" id="IPR001975">
    <property type="entry name" value="Ribosomal_eL40_dom"/>
</dbReference>
<dbReference type="InterPro" id="IPR038587">
    <property type="entry name" value="Ribosomal_eL40_sf"/>
</dbReference>
<dbReference type="InterPro" id="IPR011332">
    <property type="entry name" value="Ribosomal_zn-bd"/>
</dbReference>
<dbReference type="NCBIfam" id="NF003161">
    <property type="entry name" value="PRK04136.1"/>
    <property type="match status" value="1"/>
</dbReference>
<dbReference type="PANTHER" id="PTHR39649">
    <property type="entry name" value="50S RIBOSOMAL PROTEIN L40E"/>
    <property type="match status" value="1"/>
</dbReference>
<dbReference type="PANTHER" id="PTHR39649:SF1">
    <property type="entry name" value="LARGE RIBOSOMAL SUBUNIT PROTEIN EL40"/>
    <property type="match status" value="1"/>
</dbReference>
<dbReference type="Pfam" id="PF01020">
    <property type="entry name" value="Ribosomal_L40e"/>
    <property type="match status" value="1"/>
</dbReference>
<dbReference type="SMART" id="SM01377">
    <property type="entry name" value="Ribosomal_L40e"/>
    <property type="match status" value="1"/>
</dbReference>
<dbReference type="SUPFAM" id="SSF57829">
    <property type="entry name" value="Zn-binding ribosomal proteins"/>
    <property type="match status" value="1"/>
</dbReference>
<feature type="chain" id="PRO_1000148485" description="Large ribosomal subunit protein eL40">
    <location>
        <begin position="1"/>
        <end position="48"/>
    </location>
</feature>
<organism>
    <name type="scientific">Methanosphaerula palustris (strain ATCC BAA-1556 / DSM 19958 / E1-9c)</name>
    <dbReference type="NCBI Taxonomy" id="521011"/>
    <lineage>
        <taxon>Archaea</taxon>
        <taxon>Methanobacteriati</taxon>
        <taxon>Methanobacteriota</taxon>
        <taxon>Stenosarchaea group</taxon>
        <taxon>Methanomicrobia</taxon>
        <taxon>Methanomicrobiales</taxon>
        <taxon>Methanoregulaceae</taxon>
        <taxon>Methanosphaerula</taxon>
    </lineage>
</organism>